<proteinExistence type="inferred from homology"/>
<comment type="catalytic activity">
    <reaction evidence="1">
        <text>an aldehyde + NAD(+) + H2O = a carboxylate + NADH + 2 H(+)</text>
        <dbReference type="Rhea" id="RHEA:16185"/>
        <dbReference type="ChEBI" id="CHEBI:15377"/>
        <dbReference type="ChEBI" id="CHEBI:15378"/>
        <dbReference type="ChEBI" id="CHEBI:17478"/>
        <dbReference type="ChEBI" id="CHEBI:29067"/>
        <dbReference type="ChEBI" id="CHEBI:57540"/>
        <dbReference type="ChEBI" id="CHEBI:57945"/>
        <dbReference type="EC" id="1.2.1.3"/>
    </reaction>
</comment>
<comment type="disruption phenotype">
    <text evidence="3">No effect on vanillin degradation.</text>
</comment>
<comment type="similarity">
    <text evidence="4">Belongs to the aldehyde dehydrogenase family.</text>
</comment>
<reference key="1">
    <citation type="journal article" date="1995" name="DNA Res.">
        <title>Cloning and sequencing of a 36-kb region of the Bacillus subtilis genome between the gnt and iol operons.</title>
        <authorList>
            <person name="Yoshida K."/>
            <person name="Seki S."/>
            <person name="Fujimura M."/>
            <person name="Miwa Y."/>
            <person name="Fujita Y."/>
        </authorList>
    </citation>
    <scope>NUCLEOTIDE SEQUENCE [GENOMIC DNA]</scope>
    <source>
        <strain>168 / BGSC1A1</strain>
    </source>
</reference>
<reference key="2">
    <citation type="journal article" date="1997" name="Nature">
        <title>The complete genome sequence of the Gram-positive bacterium Bacillus subtilis.</title>
        <authorList>
            <person name="Kunst F."/>
            <person name="Ogasawara N."/>
            <person name="Moszer I."/>
            <person name="Albertini A.M."/>
            <person name="Alloni G."/>
            <person name="Azevedo V."/>
            <person name="Bertero M.G."/>
            <person name="Bessieres P."/>
            <person name="Bolotin A."/>
            <person name="Borchert S."/>
            <person name="Borriss R."/>
            <person name="Boursier L."/>
            <person name="Brans A."/>
            <person name="Braun M."/>
            <person name="Brignell S.C."/>
            <person name="Bron S."/>
            <person name="Brouillet S."/>
            <person name="Bruschi C.V."/>
            <person name="Caldwell B."/>
            <person name="Capuano V."/>
            <person name="Carter N.M."/>
            <person name="Choi S.-K."/>
            <person name="Codani J.-J."/>
            <person name="Connerton I.F."/>
            <person name="Cummings N.J."/>
            <person name="Daniel R.A."/>
            <person name="Denizot F."/>
            <person name="Devine K.M."/>
            <person name="Duesterhoeft A."/>
            <person name="Ehrlich S.D."/>
            <person name="Emmerson P.T."/>
            <person name="Entian K.-D."/>
            <person name="Errington J."/>
            <person name="Fabret C."/>
            <person name="Ferrari E."/>
            <person name="Foulger D."/>
            <person name="Fritz C."/>
            <person name="Fujita M."/>
            <person name="Fujita Y."/>
            <person name="Fuma S."/>
            <person name="Galizzi A."/>
            <person name="Galleron N."/>
            <person name="Ghim S.-Y."/>
            <person name="Glaser P."/>
            <person name="Goffeau A."/>
            <person name="Golightly E.J."/>
            <person name="Grandi G."/>
            <person name="Guiseppi G."/>
            <person name="Guy B.J."/>
            <person name="Haga K."/>
            <person name="Haiech J."/>
            <person name="Harwood C.R."/>
            <person name="Henaut A."/>
            <person name="Hilbert H."/>
            <person name="Holsappel S."/>
            <person name="Hosono S."/>
            <person name="Hullo M.-F."/>
            <person name="Itaya M."/>
            <person name="Jones L.-M."/>
            <person name="Joris B."/>
            <person name="Karamata D."/>
            <person name="Kasahara Y."/>
            <person name="Klaerr-Blanchard M."/>
            <person name="Klein C."/>
            <person name="Kobayashi Y."/>
            <person name="Koetter P."/>
            <person name="Koningstein G."/>
            <person name="Krogh S."/>
            <person name="Kumano M."/>
            <person name="Kurita K."/>
            <person name="Lapidus A."/>
            <person name="Lardinois S."/>
            <person name="Lauber J."/>
            <person name="Lazarevic V."/>
            <person name="Lee S.-M."/>
            <person name="Levine A."/>
            <person name="Liu H."/>
            <person name="Masuda S."/>
            <person name="Mauel C."/>
            <person name="Medigue C."/>
            <person name="Medina N."/>
            <person name="Mellado R.P."/>
            <person name="Mizuno M."/>
            <person name="Moestl D."/>
            <person name="Nakai S."/>
            <person name="Noback M."/>
            <person name="Noone D."/>
            <person name="O'Reilly M."/>
            <person name="Ogawa K."/>
            <person name="Ogiwara A."/>
            <person name="Oudega B."/>
            <person name="Park S.-H."/>
            <person name="Parro V."/>
            <person name="Pohl T.M."/>
            <person name="Portetelle D."/>
            <person name="Porwollik S."/>
            <person name="Prescott A.M."/>
            <person name="Presecan E."/>
            <person name="Pujic P."/>
            <person name="Purnelle B."/>
            <person name="Rapoport G."/>
            <person name="Rey M."/>
            <person name="Reynolds S."/>
            <person name="Rieger M."/>
            <person name="Rivolta C."/>
            <person name="Rocha E."/>
            <person name="Roche B."/>
            <person name="Rose M."/>
            <person name="Sadaie Y."/>
            <person name="Sato T."/>
            <person name="Scanlan E."/>
            <person name="Schleich S."/>
            <person name="Schroeter R."/>
            <person name="Scoffone F."/>
            <person name="Sekiguchi J."/>
            <person name="Sekowska A."/>
            <person name="Seror S.J."/>
            <person name="Serror P."/>
            <person name="Shin B.-S."/>
            <person name="Soldo B."/>
            <person name="Sorokin A."/>
            <person name="Tacconi E."/>
            <person name="Takagi T."/>
            <person name="Takahashi H."/>
            <person name="Takemaru K."/>
            <person name="Takeuchi M."/>
            <person name="Tamakoshi A."/>
            <person name="Tanaka T."/>
            <person name="Terpstra P."/>
            <person name="Tognoni A."/>
            <person name="Tosato V."/>
            <person name="Uchiyama S."/>
            <person name="Vandenbol M."/>
            <person name="Vannier F."/>
            <person name="Vassarotti A."/>
            <person name="Viari A."/>
            <person name="Wambutt R."/>
            <person name="Wedler E."/>
            <person name="Wedler H."/>
            <person name="Weitzenegger T."/>
            <person name="Winters P."/>
            <person name="Wipat A."/>
            <person name="Yamamoto H."/>
            <person name="Yamane K."/>
            <person name="Yasumoto K."/>
            <person name="Yata K."/>
            <person name="Yoshida K."/>
            <person name="Yoshikawa H.-F."/>
            <person name="Zumstein E."/>
            <person name="Yoshikawa H."/>
            <person name="Danchin A."/>
        </authorList>
    </citation>
    <scope>NUCLEOTIDE SEQUENCE [LARGE SCALE GENOMIC DNA]</scope>
    <source>
        <strain>168</strain>
    </source>
</reference>
<reference key="3">
    <citation type="journal article" date="2009" name="Microbiology">
        <title>From a consortium sequence to a unified sequence: the Bacillus subtilis 168 reference genome a decade later.</title>
        <authorList>
            <person name="Barbe V."/>
            <person name="Cruveiller S."/>
            <person name="Kunst F."/>
            <person name="Lenoble P."/>
            <person name="Meurice G."/>
            <person name="Sekowska A."/>
            <person name="Vallenet D."/>
            <person name="Wang T."/>
            <person name="Moszer I."/>
            <person name="Medigue C."/>
            <person name="Danchin A."/>
        </authorList>
    </citation>
    <scope>SEQUENCE REVISION TO 163</scope>
</reference>
<reference key="4">
    <citation type="journal article" date="2016" name="Appl. Microbiol. Biotechnol.">
        <title>Identification and characterization of the vanillin dehydrogenase YfmT in Bacillus subtilis 3NA.</title>
        <authorList>
            <person name="Graf N."/>
            <person name="Wenzel M."/>
            <person name="Altenbuchner J."/>
        </authorList>
    </citation>
    <scope>DISRUPTION PHENOTYPE</scope>
    <source>
        <strain>168 / 3NA</strain>
    </source>
</reference>
<dbReference type="EC" id="1.2.1.3" evidence="1"/>
<dbReference type="EMBL" id="AB005554">
    <property type="protein sequence ID" value="BAA21599.1"/>
    <property type="molecule type" value="Genomic_DNA"/>
</dbReference>
<dbReference type="EMBL" id="AL009126">
    <property type="protein sequence ID" value="CAB16022.2"/>
    <property type="molecule type" value="Genomic_DNA"/>
</dbReference>
<dbReference type="PIR" id="B69584">
    <property type="entry name" value="B69584"/>
</dbReference>
<dbReference type="RefSeq" id="NP_391865.2">
    <property type="nucleotide sequence ID" value="NC_000964.3"/>
</dbReference>
<dbReference type="RefSeq" id="WP_003243415.1">
    <property type="nucleotide sequence ID" value="NZ_OZ025638.1"/>
</dbReference>
<dbReference type="SMR" id="P46329"/>
<dbReference type="FunCoup" id="P46329">
    <property type="interactions" value="354"/>
</dbReference>
<dbReference type="STRING" id="224308.BSU39860"/>
<dbReference type="PaxDb" id="224308-BSU39860"/>
<dbReference type="EnsemblBacteria" id="CAB16022">
    <property type="protein sequence ID" value="CAB16022"/>
    <property type="gene ID" value="BSU_39860"/>
</dbReference>
<dbReference type="GeneID" id="937653"/>
<dbReference type="KEGG" id="bsu:BSU39860"/>
<dbReference type="PATRIC" id="fig|224308.179.peg.4312"/>
<dbReference type="eggNOG" id="COG1012">
    <property type="taxonomic scope" value="Bacteria"/>
</dbReference>
<dbReference type="InParanoid" id="P46329"/>
<dbReference type="OrthoDB" id="9762913at2"/>
<dbReference type="PhylomeDB" id="P46329"/>
<dbReference type="BioCyc" id="BSUB:BSU39860-MONOMER"/>
<dbReference type="Proteomes" id="UP000001570">
    <property type="component" value="Chromosome"/>
</dbReference>
<dbReference type="GO" id="GO:0005737">
    <property type="term" value="C:cytoplasm"/>
    <property type="evidence" value="ECO:0000318"/>
    <property type="project" value="GO_Central"/>
</dbReference>
<dbReference type="GO" id="GO:0004029">
    <property type="term" value="F:aldehyde dehydrogenase (NAD+) activity"/>
    <property type="evidence" value="ECO:0000318"/>
    <property type="project" value="GO_Central"/>
</dbReference>
<dbReference type="GO" id="GO:0006081">
    <property type="term" value="P:aldehyde metabolic process"/>
    <property type="evidence" value="ECO:0000318"/>
    <property type="project" value="GO_Central"/>
</dbReference>
<dbReference type="CDD" id="cd07134">
    <property type="entry name" value="ALDH_AlkH-like"/>
    <property type="match status" value="1"/>
</dbReference>
<dbReference type="FunFam" id="3.40.309.10:FF:000003">
    <property type="entry name" value="Aldehyde dehydrogenase"/>
    <property type="match status" value="1"/>
</dbReference>
<dbReference type="FunFam" id="3.40.605.10:FF:000004">
    <property type="entry name" value="Aldehyde dehydrogenase"/>
    <property type="match status" value="1"/>
</dbReference>
<dbReference type="Gene3D" id="3.40.605.10">
    <property type="entry name" value="Aldehyde Dehydrogenase, Chain A, domain 1"/>
    <property type="match status" value="1"/>
</dbReference>
<dbReference type="Gene3D" id="3.40.309.10">
    <property type="entry name" value="Aldehyde Dehydrogenase, Chain A, domain 2"/>
    <property type="match status" value="1"/>
</dbReference>
<dbReference type="InterPro" id="IPR016161">
    <property type="entry name" value="Ald_DH/histidinol_DH"/>
</dbReference>
<dbReference type="InterPro" id="IPR016163">
    <property type="entry name" value="Ald_DH_C"/>
</dbReference>
<dbReference type="InterPro" id="IPR016160">
    <property type="entry name" value="Ald_DH_CS_CYS"/>
</dbReference>
<dbReference type="InterPro" id="IPR029510">
    <property type="entry name" value="Ald_DH_CS_GLU"/>
</dbReference>
<dbReference type="InterPro" id="IPR016162">
    <property type="entry name" value="Ald_DH_N"/>
</dbReference>
<dbReference type="InterPro" id="IPR015590">
    <property type="entry name" value="Aldehyde_DH_dom"/>
</dbReference>
<dbReference type="InterPro" id="IPR012394">
    <property type="entry name" value="Aldehyde_DH_NAD(P)"/>
</dbReference>
<dbReference type="PANTHER" id="PTHR43570">
    <property type="entry name" value="ALDEHYDE DEHYDROGENASE"/>
    <property type="match status" value="1"/>
</dbReference>
<dbReference type="PANTHER" id="PTHR43570:SF20">
    <property type="entry name" value="ALDEHYDE DEHYDROGENASE ALDX-RELATED"/>
    <property type="match status" value="1"/>
</dbReference>
<dbReference type="Pfam" id="PF00171">
    <property type="entry name" value="Aldedh"/>
    <property type="match status" value="1"/>
</dbReference>
<dbReference type="PIRSF" id="PIRSF036492">
    <property type="entry name" value="ALDH"/>
    <property type="match status" value="1"/>
</dbReference>
<dbReference type="SUPFAM" id="SSF53720">
    <property type="entry name" value="ALDH-like"/>
    <property type="match status" value="1"/>
</dbReference>
<dbReference type="PROSITE" id="PS00070">
    <property type="entry name" value="ALDEHYDE_DEHYDR_CYS"/>
    <property type="match status" value="1"/>
</dbReference>
<dbReference type="PROSITE" id="PS00687">
    <property type="entry name" value="ALDEHYDE_DEHYDR_GLU"/>
    <property type="match status" value="1"/>
</dbReference>
<protein>
    <recommendedName>
        <fullName evidence="1">Putative aldehyde dehydrogenase AldX</fullName>
        <ecNumber evidence="1">1.2.1.3</ecNumber>
    </recommendedName>
</protein>
<sequence length="445" mass="49571">MEQQVKDDIQRVFQLQKKQQKALRASTAEQRREKLQRFLDSVIAHEEEIIEAIRKDVRKPYHEVKKAEIEGTKKAIRDNMNNLEQWMAPKEVGSSLSPDANGILMYEPKGVTLILGPWNYPFMLTMAPLAASLAAGNSAIVKLSDFTMNTSNIAAKVIRDAFDEKEVAIFEGEVEVATELLDQPFDHIFFTGSTNVGKIVMTAAAKHLASVTLELGGKSPTIIDSEYDLMDAAKKIAVGKFVNAGQTCIAPDYLFIKKDVQDRFAGILQTVVNAGFMEDDHTPDRSKFTQIVNDRNFNRVKDLFDDAIERGAEVVFGGVFDASDRTISPTVLKNVTPDMKIMQEEIFASILPMMNYEDIDEVIDYVNDRDKPLALYVFSKNQDLIDNVLQHTTSGNAAINDVVVHFSDVNLPFGGVNTSGIGSYHGVYGFKEFSHEKGVFIQAAE</sequence>
<feature type="chain" id="PRO_0000056446" description="Putative aldehyde dehydrogenase AldX">
    <location>
        <begin position="1"/>
        <end position="445"/>
    </location>
</feature>
<feature type="active site" evidence="1">
    <location>
        <position position="214"/>
    </location>
</feature>
<feature type="active site" evidence="2">
    <location>
        <position position="248"/>
    </location>
</feature>
<feature type="sequence conflict" description="In Ref. 1; BAA21599." evidence="4" ref="1">
    <original>D</original>
    <variation>N</variation>
    <location>
        <position position="163"/>
    </location>
</feature>
<organism>
    <name type="scientific">Bacillus subtilis (strain 168)</name>
    <dbReference type="NCBI Taxonomy" id="224308"/>
    <lineage>
        <taxon>Bacteria</taxon>
        <taxon>Bacillati</taxon>
        <taxon>Bacillota</taxon>
        <taxon>Bacilli</taxon>
        <taxon>Bacillales</taxon>
        <taxon>Bacillaceae</taxon>
        <taxon>Bacillus</taxon>
    </lineage>
</organism>
<gene>
    <name type="primary">aldX</name>
    <name type="synonym">yxaS</name>
    <name type="synonym">yxbE</name>
    <name type="ordered locus">BSU39860</name>
    <name type="ORF">VE7FR</name>
</gene>
<accession>P46329</accession>
<keyword id="KW-0520">NAD</keyword>
<keyword id="KW-0560">Oxidoreductase</keyword>
<keyword id="KW-1185">Reference proteome</keyword>
<evidence type="ECO:0000255" key="1">
    <source>
        <dbReference type="PROSITE-ProRule" id="PRU10007"/>
    </source>
</evidence>
<evidence type="ECO:0000255" key="2">
    <source>
        <dbReference type="PROSITE-ProRule" id="PRU10008"/>
    </source>
</evidence>
<evidence type="ECO:0000269" key="3">
    <source>
    </source>
</evidence>
<evidence type="ECO:0000305" key="4"/>
<name>ALDH3_BACSU</name>